<reference key="1">
    <citation type="journal article" date="1999" name="Nature">
        <title>Sequence and analysis of chromosome 2 of the plant Arabidopsis thaliana.</title>
        <authorList>
            <person name="Lin X."/>
            <person name="Kaul S."/>
            <person name="Rounsley S.D."/>
            <person name="Shea T.P."/>
            <person name="Benito M.-I."/>
            <person name="Town C.D."/>
            <person name="Fujii C.Y."/>
            <person name="Mason T.M."/>
            <person name="Bowman C.L."/>
            <person name="Barnstead M.E."/>
            <person name="Feldblyum T.V."/>
            <person name="Buell C.R."/>
            <person name="Ketchum K.A."/>
            <person name="Lee J.J."/>
            <person name="Ronning C.M."/>
            <person name="Koo H.L."/>
            <person name="Moffat K.S."/>
            <person name="Cronin L.A."/>
            <person name="Shen M."/>
            <person name="Pai G."/>
            <person name="Van Aken S."/>
            <person name="Umayam L."/>
            <person name="Tallon L.J."/>
            <person name="Gill J.E."/>
            <person name="Adams M.D."/>
            <person name="Carrera A.J."/>
            <person name="Creasy T.H."/>
            <person name="Goodman H.M."/>
            <person name="Somerville C.R."/>
            <person name="Copenhaver G.P."/>
            <person name="Preuss D."/>
            <person name="Nierman W.C."/>
            <person name="White O."/>
            <person name="Eisen J.A."/>
            <person name="Salzberg S.L."/>
            <person name="Fraser C.M."/>
            <person name="Venter J.C."/>
        </authorList>
    </citation>
    <scope>NUCLEOTIDE SEQUENCE [LARGE SCALE GENOMIC DNA]</scope>
    <source>
        <strain>cv. Columbia</strain>
    </source>
</reference>
<reference key="2">
    <citation type="journal article" date="2017" name="Plant J.">
        <title>Araport11: a complete reannotation of the Arabidopsis thaliana reference genome.</title>
        <authorList>
            <person name="Cheng C.Y."/>
            <person name="Krishnakumar V."/>
            <person name="Chan A.P."/>
            <person name="Thibaud-Nissen F."/>
            <person name="Schobel S."/>
            <person name="Town C.D."/>
        </authorList>
    </citation>
    <scope>GENOME REANNOTATION</scope>
    <source>
        <strain>cv. Columbia</strain>
    </source>
</reference>
<reference key="3">
    <citation type="submission" date="2006-07" db="EMBL/GenBank/DDBJ databases">
        <title>Large-scale analysis of RIKEN Arabidopsis full-length (RAFL) cDNAs.</title>
        <authorList>
            <person name="Totoki Y."/>
            <person name="Seki M."/>
            <person name="Ishida J."/>
            <person name="Nakajima M."/>
            <person name="Enju A."/>
            <person name="Kamiya A."/>
            <person name="Narusaka M."/>
            <person name="Shin-i T."/>
            <person name="Nakagawa M."/>
            <person name="Sakamoto N."/>
            <person name="Oishi K."/>
            <person name="Kohara Y."/>
            <person name="Kobayashi M."/>
            <person name="Toyoda A."/>
            <person name="Sakaki Y."/>
            <person name="Sakurai T."/>
            <person name="Iida K."/>
            <person name="Akiyama K."/>
            <person name="Satou M."/>
            <person name="Toyoda T."/>
            <person name="Konagaya A."/>
            <person name="Carninci P."/>
            <person name="Kawai J."/>
            <person name="Hayashizaki Y."/>
            <person name="Shinozaki K."/>
        </authorList>
    </citation>
    <scope>NUCLEOTIDE SEQUENCE [LARGE SCALE MRNA]</scope>
    <source>
        <strain>cv. Columbia</strain>
    </source>
</reference>
<reference key="4">
    <citation type="journal article" date="2015" name="Plant Sci.">
        <title>The Arabidopsis lectin EULS3 is involved in stomatal closure.</title>
        <authorList>
            <person name="Van Hove J."/>
            <person name="De Jaeger G."/>
            <person name="De Winne N."/>
            <person name="Guisez Y."/>
            <person name="Van Damme E.J."/>
        </authorList>
    </citation>
    <scope>IDENTIFICATION BY MASS SPECTROMETRY</scope>
    <scope>INTERACTION WITH EULS3</scope>
    <scope>TISSUE SPECIFICITY</scope>
</reference>
<keyword id="KW-1185">Reference proteome</keyword>
<keyword id="KW-0964">Secreted</keyword>
<keyword id="KW-0732">Signal</keyword>
<organism>
    <name type="scientific">Arabidopsis thaliana</name>
    <name type="common">Mouse-ear cress</name>
    <dbReference type="NCBI Taxonomy" id="3702"/>
    <lineage>
        <taxon>Eukaryota</taxon>
        <taxon>Viridiplantae</taxon>
        <taxon>Streptophyta</taxon>
        <taxon>Embryophyta</taxon>
        <taxon>Tracheophyta</taxon>
        <taxon>Spermatophyta</taxon>
        <taxon>Magnoliopsida</taxon>
        <taxon>eudicotyledons</taxon>
        <taxon>Gunneridae</taxon>
        <taxon>Pentapetalae</taxon>
        <taxon>rosids</taxon>
        <taxon>malvids</taxon>
        <taxon>Brassicales</taxon>
        <taxon>Brassicaceae</taxon>
        <taxon>Camelineae</taxon>
        <taxon>Arabidopsis</taxon>
    </lineage>
</organism>
<comment type="function">
    <text evidence="4">May play a role during embryo development.</text>
</comment>
<comment type="subunit">
    <text evidence="2">Interacts with EULS3 (via N-terminus).</text>
</comment>
<comment type="subcellular location">
    <subcellularLocation>
        <location evidence="4">Secreted</location>
    </subcellularLocation>
</comment>
<comment type="tissue specificity">
    <text evidence="2">Expressed in roots, rosette leaves, stems, cauline leaves and flowers.</text>
</comment>
<comment type="sequence caution" evidence="4">
    <conflict type="erroneous gene model prediction">
        <sequence resource="EMBL-CDS" id="AAC23732"/>
    </conflict>
</comment>
<gene>
    <name evidence="3" type="primary">ATS3A</name>
    <name evidence="5" type="ordered locus">At2g41475</name>
</gene>
<protein>
    <recommendedName>
        <fullName evidence="4">Embryo-specific protein ATS3A</fullName>
    </recommendedName>
    <alternativeName>
        <fullName evidence="4">Protein ARABIDOPSIS THALIANA SEED 3A</fullName>
    </alternativeName>
</protein>
<dbReference type="EMBL" id="AC004625">
    <property type="protein sequence ID" value="AAC23732.1"/>
    <property type="status" value="ALT_SEQ"/>
    <property type="molecule type" value="Genomic_DNA"/>
</dbReference>
<dbReference type="EMBL" id="CP002685">
    <property type="protein sequence ID" value="AEC09988.1"/>
    <property type="molecule type" value="Genomic_DNA"/>
</dbReference>
<dbReference type="EMBL" id="AK175164">
    <property type="protein sequence ID" value="BAD42927.1"/>
    <property type="molecule type" value="mRNA"/>
</dbReference>
<dbReference type="EMBL" id="AK175615">
    <property type="protein sequence ID" value="BAD43378.1"/>
    <property type="molecule type" value="mRNA"/>
</dbReference>
<dbReference type="EMBL" id="AK175765">
    <property type="protein sequence ID" value="BAD43528.1"/>
    <property type="molecule type" value="mRNA"/>
</dbReference>
<dbReference type="EMBL" id="AK221826">
    <property type="protein sequence ID" value="BAD94040.1"/>
    <property type="molecule type" value="mRNA"/>
</dbReference>
<dbReference type="EMBL" id="AK221888">
    <property type="protein sequence ID" value="BAD94228.1"/>
    <property type="molecule type" value="mRNA"/>
</dbReference>
<dbReference type="EMBL" id="AK228257">
    <property type="protein sequence ID" value="BAF00205.1"/>
    <property type="molecule type" value="mRNA"/>
</dbReference>
<dbReference type="PIR" id="T02442">
    <property type="entry name" value="T02442"/>
</dbReference>
<dbReference type="RefSeq" id="NP_001118501.1">
    <property type="nucleotide sequence ID" value="NM_001125029.2"/>
</dbReference>
<dbReference type="SMR" id="Q681K2"/>
<dbReference type="FunCoup" id="Q681K2">
    <property type="interactions" value="68"/>
</dbReference>
<dbReference type="STRING" id="3702.Q681K2"/>
<dbReference type="PaxDb" id="3702-AT2G41475.1"/>
<dbReference type="ProteomicsDB" id="241010"/>
<dbReference type="EnsemblPlants" id="AT2G41475.1">
    <property type="protein sequence ID" value="AT2G41475.1"/>
    <property type="gene ID" value="AT2G41475"/>
</dbReference>
<dbReference type="GeneID" id="6240499"/>
<dbReference type="Gramene" id="AT2G41475.1">
    <property type="protein sequence ID" value="AT2G41475.1"/>
    <property type="gene ID" value="AT2G41475"/>
</dbReference>
<dbReference type="KEGG" id="ath:AT2G41475"/>
<dbReference type="Araport" id="AT2G41475"/>
<dbReference type="TAIR" id="AT2G41475">
    <property type="gene designation" value="ATS3A"/>
</dbReference>
<dbReference type="eggNOG" id="ENOG502S14I">
    <property type="taxonomic scope" value="Eukaryota"/>
</dbReference>
<dbReference type="HOGENOM" id="CLU_102727_2_0_1"/>
<dbReference type="InParanoid" id="Q681K2"/>
<dbReference type="OMA" id="KISGPCM"/>
<dbReference type="PhylomeDB" id="Q681K2"/>
<dbReference type="PRO" id="PR:Q681K2"/>
<dbReference type="Proteomes" id="UP000006548">
    <property type="component" value="Chromosome 2"/>
</dbReference>
<dbReference type="ExpressionAtlas" id="Q681K2">
    <property type="expression patterns" value="baseline and differential"/>
</dbReference>
<dbReference type="GO" id="GO:0005576">
    <property type="term" value="C:extracellular region"/>
    <property type="evidence" value="ECO:0007669"/>
    <property type="project" value="UniProtKB-SubCell"/>
</dbReference>
<dbReference type="GO" id="GO:0009506">
    <property type="term" value="C:plasmodesma"/>
    <property type="evidence" value="ECO:0007005"/>
    <property type="project" value="TAIR"/>
</dbReference>
<dbReference type="CDD" id="cd00113">
    <property type="entry name" value="PLAT"/>
    <property type="match status" value="1"/>
</dbReference>
<dbReference type="FunFam" id="2.60.60.20:FF:000026">
    <property type="entry name" value="Embryo-specific protein ATS3A"/>
    <property type="match status" value="1"/>
</dbReference>
<dbReference type="Gene3D" id="2.60.60.20">
    <property type="entry name" value="PLAT/LH2 domain"/>
    <property type="match status" value="1"/>
</dbReference>
<dbReference type="InterPro" id="IPR010417">
    <property type="entry name" value="Embryo-specific_ATS3"/>
</dbReference>
<dbReference type="InterPro" id="IPR036392">
    <property type="entry name" value="PLAT/LH2_dom_sf"/>
</dbReference>
<dbReference type="PANTHER" id="PTHR31718:SF46">
    <property type="entry name" value="EMBRYO-SPECIFIC PROTEIN ATS3A"/>
    <property type="match status" value="1"/>
</dbReference>
<dbReference type="PANTHER" id="PTHR31718">
    <property type="entry name" value="PLAT DOMAIN-CONTAINING PROTEIN"/>
    <property type="match status" value="1"/>
</dbReference>
<dbReference type="Pfam" id="PF06232">
    <property type="entry name" value="ATS3"/>
    <property type="match status" value="1"/>
</dbReference>
<dbReference type="SUPFAM" id="SSF49723">
    <property type="entry name" value="Lipase/lipooxygenase domain (PLAT/LH2 domain)"/>
    <property type="match status" value="1"/>
</dbReference>
<name>ATS3A_ARATH</name>
<evidence type="ECO:0000255" key="1"/>
<evidence type="ECO:0000269" key="2">
    <source>
    </source>
</evidence>
<evidence type="ECO:0000303" key="3">
    <source>
    </source>
</evidence>
<evidence type="ECO:0000305" key="4"/>
<evidence type="ECO:0000312" key="5">
    <source>
        <dbReference type="Araport" id="AT2G41475"/>
    </source>
</evidence>
<accession>Q681K2</accession>
<accession>O80821</accession>
<feature type="signal peptide" evidence="1">
    <location>
        <begin position="1"/>
        <end position="22"/>
    </location>
</feature>
<feature type="chain" id="PRO_5008175937" description="Embryo-specific protein ATS3A">
    <location>
        <begin position="23"/>
        <end position="179"/>
    </location>
</feature>
<feature type="domain" description="PLAT" evidence="4">
    <location>
        <begin position="48"/>
        <end position="158"/>
    </location>
</feature>
<proteinExistence type="evidence at protein level"/>
<sequence>MLRLAIPLFLFALCSFTLFSSARSFITTKPLPIDSFIPKPKLENAAACSYTVIIKTSCSSVSYTRDKISISFGDVYGNEVYVKRLDDPSSRTFEKCSSDTYKISGPCMRDVCYLYLLRQGSDGWKPENVKIYGSSIRSVTFYYNLFLPNSVWYGFNVCNGIGNTKSSQPISTTSSVAAM</sequence>